<accession>Q82A99</accession>
<comment type="function">
    <text evidence="1">IGPS catalyzes the conversion of PRFAR and glutamine to IGP, AICAR and glutamate. The HisF subunit catalyzes the cyclization activity that produces IGP and AICAR from PRFAR using the ammonia provided by the HisH subunit.</text>
</comment>
<comment type="catalytic activity">
    <reaction evidence="1">
        <text>5-[(5-phospho-1-deoxy-D-ribulos-1-ylimino)methylamino]-1-(5-phospho-beta-D-ribosyl)imidazole-4-carboxamide + L-glutamine = D-erythro-1-(imidazol-4-yl)glycerol 3-phosphate + 5-amino-1-(5-phospho-beta-D-ribosyl)imidazole-4-carboxamide + L-glutamate + H(+)</text>
        <dbReference type="Rhea" id="RHEA:24793"/>
        <dbReference type="ChEBI" id="CHEBI:15378"/>
        <dbReference type="ChEBI" id="CHEBI:29985"/>
        <dbReference type="ChEBI" id="CHEBI:58278"/>
        <dbReference type="ChEBI" id="CHEBI:58359"/>
        <dbReference type="ChEBI" id="CHEBI:58475"/>
        <dbReference type="ChEBI" id="CHEBI:58525"/>
        <dbReference type="EC" id="4.3.2.10"/>
    </reaction>
</comment>
<comment type="pathway">
    <text evidence="1">Amino-acid biosynthesis; L-histidine biosynthesis; L-histidine from 5-phospho-alpha-D-ribose 1-diphosphate: step 5/9.</text>
</comment>
<comment type="subunit">
    <text evidence="1">Heterodimer of HisH and HisF.</text>
</comment>
<comment type="subcellular location">
    <subcellularLocation>
        <location evidence="1">Cytoplasm</location>
    </subcellularLocation>
</comment>
<comment type="similarity">
    <text evidence="1">Belongs to the HisA/HisF family.</text>
</comment>
<gene>
    <name evidence="1" type="primary">hisF</name>
    <name type="ordered locus">SAV_6160</name>
</gene>
<reference key="1">
    <citation type="journal article" date="2001" name="Proc. Natl. Acad. Sci. U.S.A.">
        <title>Genome sequence of an industrial microorganism Streptomyces avermitilis: deducing the ability of producing secondary metabolites.</title>
        <authorList>
            <person name="Omura S."/>
            <person name="Ikeda H."/>
            <person name="Ishikawa J."/>
            <person name="Hanamoto A."/>
            <person name="Takahashi C."/>
            <person name="Shinose M."/>
            <person name="Takahashi Y."/>
            <person name="Horikawa H."/>
            <person name="Nakazawa H."/>
            <person name="Osonoe T."/>
            <person name="Kikuchi H."/>
            <person name="Shiba T."/>
            <person name="Sakaki Y."/>
            <person name="Hattori M."/>
        </authorList>
    </citation>
    <scope>NUCLEOTIDE SEQUENCE [LARGE SCALE GENOMIC DNA]</scope>
    <source>
        <strain>ATCC 31267 / DSM 46492 / JCM 5070 / NBRC 14893 / NCIMB 12804 / NRRL 8165 / MA-4680</strain>
    </source>
</reference>
<reference key="2">
    <citation type="journal article" date="2003" name="Nat. Biotechnol.">
        <title>Complete genome sequence and comparative analysis of the industrial microorganism Streptomyces avermitilis.</title>
        <authorList>
            <person name="Ikeda H."/>
            <person name="Ishikawa J."/>
            <person name="Hanamoto A."/>
            <person name="Shinose M."/>
            <person name="Kikuchi H."/>
            <person name="Shiba T."/>
            <person name="Sakaki Y."/>
            <person name="Hattori M."/>
            <person name="Omura S."/>
        </authorList>
    </citation>
    <scope>NUCLEOTIDE SEQUENCE [LARGE SCALE GENOMIC DNA]</scope>
    <source>
        <strain>ATCC 31267 / DSM 46492 / JCM 5070 / NBRC 14893 / NCIMB 12804 / NRRL 8165 / MA-4680</strain>
    </source>
</reference>
<evidence type="ECO:0000255" key="1">
    <source>
        <dbReference type="HAMAP-Rule" id="MF_01013"/>
    </source>
</evidence>
<proteinExistence type="inferred from homology"/>
<feature type="chain" id="PRO_0000142242" description="Imidazole glycerol phosphate synthase subunit HisF">
    <location>
        <begin position="1"/>
        <end position="251"/>
    </location>
</feature>
<feature type="active site" evidence="1">
    <location>
        <position position="12"/>
    </location>
</feature>
<feature type="active site" evidence="1">
    <location>
        <position position="131"/>
    </location>
</feature>
<keyword id="KW-0028">Amino-acid biosynthesis</keyword>
<keyword id="KW-0963">Cytoplasm</keyword>
<keyword id="KW-0368">Histidine biosynthesis</keyword>
<keyword id="KW-0456">Lyase</keyword>
<keyword id="KW-1185">Reference proteome</keyword>
<name>HIS6_STRAW</name>
<sequence length="251" mass="26551">MTLAVRVIPCLDVDNGRVVKGVNFQNLRDAGDPVEMAKVYDAEGADELTFLDITASSGNRETTYDVVRRTAEQVFIPLTVGGGVRTPDDVDKLLRAGADKVGVNTAAIARPELIREIAERFGRQVLVLSVDARRTESGSFEVTTHGGRKGTGIDAVEWAHRAAELGAGEILLNSMDADGTKDGYDLEMIAAVRAHVTVPVIASGGAGKLDHFPPAIAAGADAVLAASVFHFGDLRIGEVKETLRAAGHPVR</sequence>
<organism>
    <name type="scientific">Streptomyces avermitilis (strain ATCC 31267 / DSM 46492 / JCM 5070 / NBRC 14893 / NCIMB 12804 / NRRL 8165 / MA-4680)</name>
    <dbReference type="NCBI Taxonomy" id="227882"/>
    <lineage>
        <taxon>Bacteria</taxon>
        <taxon>Bacillati</taxon>
        <taxon>Actinomycetota</taxon>
        <taxon>Actinomycetes</taxon>
        <taxon>Kitasatosporales</taxon>
        <taxon>Streptomycetaceae</taxon>
        <taxon>Streptomyces</taxon>
    </lineage>
</organism>
<dbReference type="EC" id="4.3.2.10" evidence="1"/>
<dbReference type="EMBL" id="BA000030">
    <property type="protein sequence ID" value="BAC73871.1"/>
    <property type="molecule type" value="Genomic_DNA"/>
</dbReference>
<dbReference type="RefSeq" id="WP_010987561.1">
    <property type="nucleotide sequence ID" value="NZ_JZJK01000089.1"/>
</dbReference>
<dbReference type="SMR" id="Q82A99"/>
<dbReference type="GeneID" id="41543236"/>
<dbReference type="KEGG" id="sma:SAVERM_6160"/>
<dbReference type="eggNOG" id="COG0107">
    <property type="taxonomic scope" value="Bacteria"/>
</dbReference>
<dbReference type="HOGENOM" id="CLU_048577_4_0_11"/>
<dbReference type="OrthoDB" id="9781903at2"/>
<dbReference type="UniPathway" id="UPA00031">
    <property type="reaction ID" value="UER00010"/>
</dbReference>
<dbReference type="Proteomes" id="UP000000428">
    <property type="component" value="Chromosome"/>
</dbReference>
<dbReference type="GO" id="GO:0005737">
    <property type="term" value="C:cytoplasm"/>
    <property type="evidence" value="ECO:0007669"/>
    <property type="project" value="UniProtKB-SubCell"/>
</dbReference>
<dbReference type="GO" id="GO:0000107">
    <property type="term" value="F:imidazoleglycerol-phosphate synthase activity"/>
    <property type="evidence" value="ECO:0007669"/>
    <property type="project" value="UniProtKB-UniRule"/>
</dbReference>
<dbReference type="GO" id="GO:0016829">
    <property type="term" value="F:lyase activity"/>
    <property type="evidence" value="ECO:0007669"/>
    <property type="project" value="UniProtKB-KW"/>
</dbReference>
<dbReference type="GO" id="GO:0000105">
    <property type="term" value="P:L-histidine biosynthetic process"/>
    <property type="evidence" value="ECO:0007669"/>
    <property type="project" value="UniProtKB-UniRule"/>
</dbReference>
<dbReference type="CDD" id="cd04731">
    <property type="entry name" value="HisF"/>
    <property type="match status" value="1"/>
</dbReference>
<dbReference type="FunFam" id="3.20.20.70:FF:000006">
    <property type="entry name" value="Imidazole glycerol phosphate synthase subunit HisF"/>
    <property type="match status" value="1"/>
</dbReference>
<dbReference type="Gene3D" id="3.20.20.70">
    <property type="entry name" value="Aldolase class I"/>
    <property type="match status" value="1"/>
</dbReference>
<dbReference type="HAMAP" id="MF_01013">
    <property type="entry name" value="HisF"/>
    <property type="match status" value="1"/>
</dbReference>
<dbReference type="InterPro" id="IPR013785">
    <property type="entry name" value="Aldolase_TIM"/>
</dbReference>
<dbReference type="InterPro" id="IPR006062">
    <property type="entry name" value="His_biosynth"/>
</dbReference>
<dbReference type="InterPro" id="IPR004651">
    <property type="entry name" value="HisF"/>
</dbReference>
<dbReference type="InterPro" id="IPR050064">
    <property type="entry name" value="IGPS_HisA/HisF"/>
</dbReference>
<dbReference type="InterPro" id="IPR011060">
    <property type="entry name" value="RibuloseP-bd_barrel"/>
</dbReference>
<dbReference type="NCBIfam" id="TIGR00735">
    <property type="entry name" value="hisF"/>
    <property type="match status" value="1"/>
</dbReference>
<dbReference type="PANTHER" id="PTHR21235:SF2">
    <property type="entry name" value="IMIDAZOLE GLYCEROL PHOSPHATE SYNTHASE HISHF"/>
    <property type="match status" value="1"/>
</dbReference>
<dbReference type="PANTHER" id="PTHR21235">
    <property type="entry name" value="IMIDAZOLE GLYCEROL PHOSPHATE SYNTHASE SUBUNIT HISF/H IGP SYNTHASE SUBUNIT HISF/H"/>
    <property type="match status" value="1"/>
</dbReference>
<dbReference type="Pfam" id="PF00977">
    <property type="entry name" value="His_biosynth"/>
    <property type="match status" value="1"/>
</dbReference>
<dbReference type="SUPFAM" id="SSF51366">
    <property type="entry name" value="Ribulose-phoshate binding barrel"/>
    <property type="match status" value="1"/>
</dbReference>
<protein>
    <recommendedName>
        <fullName evidence="1">Imidazole glycerol phosphate synthase subunit HisF</fullName>
        <ecNumber evidence="1">4.3.2.10</ecNumber>
    </recommendedName>
    <alternativeName>
        <fullName evidence="1">IGP synthase cyclase subunit</fullName>
    </alternativeName>
    <alternativeName>
        <fullName evidence="1">IGP synthase subunit HisF</fullName>
    </alternativeName>
    <alternativeName>
        <fullName evidence="1">ImGP synthase subunit HisF</fullName>
        <shortName evidence="1">IGPS subunit HisF</shortName>
    </alternativeName>
</protein>